<name>CFTR_MUNRE</name>
<feature type="chain" id="PRO_0000260777" description="Cystic fibrosis transmembrane conductance regulator">
    <location>
        <begin position="1"/>
        <end position="1481"/>
    </location>
</feature>
<feature type="topological domain" description="Cytoplasmic" evidence="1">
    <location>
        <begin position="1"/>
        <end position="77"/>
    </location>
</feature>
<feature type="transmembrane region" description="Helical; Name=1" evidence="1">
    <location>
        <begin position="78"/>
        <end position="98"/>
    </location>
</feature>
<feature type="topological domain" description="Extracellular" evidence="1">
    <location>
        <begin position="99"/>
        <end position="122"/>
    </location>
</feature>
<feature type="transmembrane region" description="Helical; Name=2" evidence="1">
    <location>
        <begin position="123"/>
        <end position="146"/>
    </location>
</feature>
<feature type="topological domain" description="Cytoplasmic" evidence="1">
    <location>
        <begin position="147"/>
        <end position="195"/>
    </location>
</feature>
<feature type="transmembrane region" description="Helical; Name=3" evidence="1">
    <location>
        <begin position="196"/>
        <end position="216"/>
    </location>
</feature>
<feature type="topological domain" description="Extracellular" evidence="1">
    <location>
        <begin position="217"/>
        <end position="222"/>
    </location>
</feature>
<feature type="transmembrane region" description="Helical; Name=4" evidence="1">
    <location>
        <begin position="223"/>
        <end position="243"/>
    </location>
</feature>
<feature type="topological domain" description="Cytoplasmic" evidence="1">
    <location>
        <begin position="244"/>
        <end position="298"/>
    </location>
</feature>
<feature type="transmembrane region" description="Helical; Name=5" evidence="1">
    <location>
        <begin position="299"/>
        <end position="319"/>
    </location>
</feature>
<feature type="topological domain" description="Extracellular" evidence="1">
    <location>
        <begin position="320"/>
        <end position="339"/>
    </location>
</feature>
<feature type="transmembrane region" description="Helical; Name=6" evidence="1">
    <location>
        <begin position="340"/>
        <end position="358"/>
    </location>
</feature>
<feature type="topological domain" description="Cytoplasmic" evidence="1">
    <location>
        <begin position="359"/>
        <end position="858"/>
    </location>
</feature>
<feature type="transmembrane region" description="Helical; Name=7" evidence="1">
    <location>
        <begin position="859"/>
        <end position="879"/>
    </location>
</feature>
<feature type="topological domain" description="Extracellular" evidence="1">
    <location>
        <begin position="880"/>
        <end position="918"/>
    </location>
</feature>
<feature type="transmembrane region" description="Discontinuously helical; Name=8" evidence="1">
    <location>
        <begin position="919"/>
        <end position="939"/>
    </location>
</feature>
<feature type="topological domain" description="Cytoplasmic" evidence="1">
    <location>
        <begin position="940"/>
        <end position="990"/>
    </location>
</feature>
<feature type="transmembrane region" description="Helical; Name=9" evidence="1">
    <location>
        <begin position="991"/>
        <end position="1011"/>
    </location>
</feature>
<feature type="topological domain" description="Extracellular" evidence="1">
    <location>
        <begin position="1012"/>
        <end position="1013"/>
    </location>
</feature>
<feature type="transmembrane region" description="Helical; Name=10" evidence="1">
    <location>
        <begin position="1014"/>
        <end position="1034"/>
    </location>
</feature>
<feature type="topological domain" description="Cytoplasmic" evidence="1">
    <location>
        <begin position="1035"/>
        <end position="1095"/>
    </location>
</feature>
<feature type="transmembrane region" description="Helical; Name=11" evidence="1">
    <location>
        <begin position="1096"/>
        <end position="1116"/>
    </location>
</feature>
<feature type="topological domain" description="Extracellular" evidence="1">
    <location>
        <begin position="1117"/>
        <end position="1130"/>
    </location>
</feature>
<feature type="transmembrane region" description="Helical; Name=12" evidence="1">
    <location>
        <begin position="1131"/>
        <end position="1151"/>
    </location>
</feature>
<feature type="topological domain" description="Cytoplasmic" evidence="1">
    <location>
        <begin position="1152"/>
        <end position="1481"/>
    </location>
</feature>
<feature type="domain" description="ABC transmembrane type-1 1" evidence="6">
    <location>
        <begin position="81"/>
        <end position="365"/>
    </location>
</feature>
<feature type="domain" description="ABC transporter 1" evidence="5">
    <location>
        <begin position="423"/>
        <end position="645"/>
    </location>
</feature>
<feature type="domain" description="ABC transmembrane type-1 2" evidence="6">
    <location>
        <begin position="859"/>
        <end position="1155"/>
    </location>
</feature>
<feature type="domain" description="ABC transporter 2" evidence="5">
    <location>
        <begin position="1211"/>
        <end position="1444"/>
    </location>
</feature>
<feature type="region of interest" description="Disordered R region" evidence="1">
    <location>
        <begin position="653"/>
        <end position="831"/>
    </location>
</feature>
<feature type="region of interest" description="Interaction with GORASP2" evidence="1">
    <location>
        <begin position="1387"/>
        <end position="1481"/>
    </location>
</feature>
<feature type="region of interest" description="Disordered" evidence="7">
    <location>
        <begin position="1452"/>
        <end position="1481"/>
    </location>
</feature>
<feature type="short sequence motif" description="PDZ-binding" evidence="1">
    <location>
        <begin position="1479"/>
        <end position="1481"/>
    </location>
</feature>
<feature type="compositionally biased region" description="Low complexity" evidence="7">
    <location>
        <begin position="1453"/>
        <end position="1464"/>
    </location>
</feature>
<feature type="compositionally biased region" description="Acidic residues" evidence="7">
    <location>
        <begin position="1471"/>
        <end position="1481"/>
    </location>
</feature>
<feature type="binding site" evidence="1">
    <location>
        <position position="401"/>
    </location>
    <ligand>
        <name>ATP</name>
        <dbReference type="ChEBI" id="CHEBI:30616"/>
        <label>1</label>
    </ligand>
</feature>
<feature type="binding site" evidence="5">
    <location>
        <begin position="457"/>
        <end position="464"/>
    </location>
    <ligand>
        <name>ATP</name>
        <dbReference type="ChEBI" id="CHEBI:30616"/>
        <label>1</label>
    </ligand>
</feature>
<feature type="binding site" evidence="2">
    <location>
        <position position="492"/>
    </location>
    <ligand>
        <name>ATP</name>
        <dbReference type="ChEBI" id="CHEBI:30616"/>
        <label>1</label>
    </ligand>
</feature>
<feature type="binding site" evidence="1">
    <location>
        <position position="1220"/>
    </location>
    <ligand>
        <name>ATP</name>
        <dbReference type="ChEBI" id="CHEBI:30616"/>
        <label>2</label>
    </ligand>
</feature>
<feature type="binding site" evidence="5">
    <location>
        <begin position="1245"/>
        <end position="1252"/>
    </location>
    <ligand>
        <name>ATP</name>
        <dbReference type="ChEBI" id="CHEBI:30616"/>
        <label>2</label>
    </ligand>
</feature>
<feature type="modified residue" description="Phosphoserine" evidence="1">
    <location>
        <position position="548"/>
    </location>
</feature>
<feature type="modified residue" description="Phosphoserine" evidence="1">
    <location>
        <position position="659"/>
    </location>
</feature>
<feature type="modified residue" description="Phosphoserine; by PKA" evidence="1">
    <location>
        <position position="669"/>
    </location>
</feature>
<feature type="modified residue" description="Phosphoserine" evidence="1">
    <location>
        <position position="685"/>
    </location>
</feature>
<feature type="modified residue" description="Phosphoserine" evidence="1">
    <location>
        <position position="699"/>
    </location>
</feature>
<feature type="modified residue" description="Phosphoserine" evidence="1">
    <location>
        <position position="711"/>
    </location>
</feature>
<feature type="modified residue" description="Phosphothreonine" evidence="1">
    <location>
        <position position="716"/>
    </location>
</feature>
<feature type="modified residue" description="Phosphoserine" evidence="1">
    <location>
        <position position="736"/>
    </location>
</feature>
<feature type="modified residue" description="Phosphoserine" evidence="1">
    <location>
        <position position="767"/>
    </location>
</feature>
<feature type="modified residue" description="Phosphoserine" evidence="1">
    <location>
        <position position="790"/>
    </location>
</feature>
<feature type="modified residue" description="Phosphoserine" evidence="1">
    <location>
        <position position="795"/>
    </location>
</feature>
<feature type="modified residue" description="Phosphoserine" evidence="1">
    <location>
        <position position="813"/>
    </location>
</feature>
<feature type="modified residue" description="Phosphoserine" evidence="1">
    <location>
        <position position="1457"/>
    </location>
</feature>
<feature type="lipid moiety-binding region" description="S-palmitoyl cysteine" evidence="1">
    <location>
        <position position="523"/>
    </location>
</feature>
<feature type="lipid moiety-binding region" description="S-palmitoyl cysteine" evidence="1">
    <location>
        <position position="1396"/>
    </location>
</feature>
<feature type="glycosylation site" description="N-linked (GlcNAc...) asparagine" evidence="4">
    <location>
        <position position="894"/>
    </location>
</feature>
<feature type="glycosylation site" description="N-linked (GlcNAc...) asparagine" evidence="4">
    <location>
        <position position="900"/>
    </location>
</feature>
<feature type="cross-link" description="Glycyl lysine isopeptide (Lys-Gly) (interchain with G-Cter in ubiquitin)" evidence="1">
    <location>
        <position position="687"/>
    </location>
</feature>
<accession>Q07DW5</accession>
<organism>
    <name type="scientific">Muntiacus reevesi</name>
    <name type="common">Reeves' muntjac</name>
    <name type="synonym">Cervus reevesi</name>
    <dbReference type="NCBI Taxonomy" id="9886"/>
    <lineage>
        <taxon>Eukaryota</taxon>
        <taxon>Metazoa</taxon>
        <taxon>Chordata</taxon>
        <taxon>Craniata</taxon>
        <taxon>Vertebrata</taxon>
        <taxon>Euteleostomi</taxon>
        <taxon>Mammalia</taxon>
        <taxon>Eutheria</taxon>
        <taxon>Laurasiatheria</taxon>
        <taxon>Artiodactyla</taxon>
        <taxon>Ruminantia</taxon>
        <taxon>Pecora</taxon>
        <taxon>Cervidae</taxon>
        <taxon>Muntiacinae</taxon>
        <taxon>Muntiacus</taxon>
    </lineage>
</organism>
<comment type="function">
    <text evidence="1 2">Epithelial ion channel that plays an important role in the regulation of epithelial ion and water transport and fluid homeostasis. Mediates the transport of chloride ions across the cell membrane (By similarity). Possesses an intrinsic ATPase activity and utilizes ATP to gate its channel; the passive flow of anions through the channel is gated by cycles of ATP binding and hydrolysis by the ATP-binding domains (By similarity). The ion channel is also permeable to HCO(3)(-); selectivity depends on the extracellular chloride concentration. Exerts its function also by modulating the activity of other ion channels and transporters. Contributes to the regulation of the pH and the ion content of the epithelial fluid layer. Modulates the activity of the epithelial sodium channel (ENaC) complex, in part by regulating the cell surface expression of the ENaC complex. May regulate bicarbonate secretion and salvage in epithelial cells by regulating the transporter SLC4A7. Can inhibit the chloride channel activity of ANO1 (By similarity). Plays a role in the chloride and bicarbonate homeostasis during sperm epididymal maturation and capacitation (By similarity).</text>
</comment>
<comment type="catalytic activity">
    <reaction evidence="1">
        <text>ATP + H2O + closed Cl(-) channel = ADP + phosphate + open Cl(-) channel.</text>
        <dbReference type="EC" id="5.6.1.6"/>
    </reaction>
</comment>
<comment type="catalytic activity">
    <reaction evidence="1">
        <text>chloride(in) = chloride(out)</text>
        <dbReference type="Rhea" id="RHEA:29823"/>
        <dbReference type="ChEBI" id="CHEBI:17996"/>
    </reaction>
</comment>
<comment type="catalytic activity">
    <reaction evidence="1">
        <text>hydrogencarbonate(in) = hydrogencarbonate(out)</text>
        <dbReference type="Rhea" id="RHEA:28695"/>
        <dbReference type="ChEBI" id="CHEBI:17544"/>
    </reaction>
</comment>
<comment type="catalytic activity">
    <reaction evidence="1">
        <text>ATP + H2O = ADP + phosphate + H(+)</text>
        <dbReference type="Rhea" id="RHEA:13065"/>
        <dbReference type="ChEBI" id="CHEBI:15377"/>
        <dbReference type="ChEBI" id="CHEBI:15378"/>
        <dbReference type="ChEBI" id="CHEBI:30616"/>
        <dbReference type="ChEBI" id="CHEBI:43474"/>
        <dbReference type="ChEBI" id="CHEBI:456216"/>
    </reaction>
    <physiologicalReaction direction="left-to-right" evidence="1">
        <dbReference type="Rhea" id="RHEA:13066"/>
    </physiologicalReaction>
</comment>
<comment type="subunit">
    <text evidence="1 2 3">Monomer; does not require oligomerization for channel activity. May form oligomers in the membrane (By similarity). Interacts with SLC26A3, SLC26A6 and NHERF1 (By similarity). Interacts with SHANK2 (By similarity). Interacts with MYO6 (By similarity). Interacts (via C-terminus) with GOPC (via PDZ domain); this promotes CFTR internalization and thereby decreases channel activity. Interacts with SLC4A7 through NHERF1. Found in a complex with MYO5B and RAB11A. Interacts with ANO1. Interacts with SLC26A8 (By similarity). Interacts with AHCYL1; the interaction increases CFTR activity (By similarity). Interacts with CSE1L (By similarity). The core-glycosylated form interacts with GORASP2 (via PDZ GRASP-type 1 domain) in respone to ER stress (By similarity). Interacts with MARCHF2; the interaction leads to CFTR ubiqtuitination and degradation (By similarity). Interacts with ADGRG2 (By similarity).</text>
</comment>
<comment type="subcellular location">
    <subcellularLocation>
        <location evidence="2">Apical cell membrane</location>
        <topology evidence="1">Multi-pass membrane protein</topology>
    </subcellularLocation>
    <subcellularLocation>
        <location evidence="1">Early endosome membrane</location>
        <topology evidence="1">Multi-pass membrane protein</topology>
    </subcellularLocation>
    <subcellularLocation>
        <location evidence="2">Cell membrane</location>
        <topology evidence="1">Multi-pass membrane protein</topology>
    </subcellularLocation>
    <subcellularLocation>
        <location evidence="1">Recycling endosome membrane</location>
        <topology evidence="1">Multi-pass membrane protein</topology>
    </subcellularLocation>
    <subcellularLocation>
        <location evidence="1">Endoplasmic reticulum membrane</location>
        <topology evidence="1">Multi-pass membrane protein</topology>
    </subcellularLocation>
    <subcellularLocation>
        <location evidence="3">Nucleus</location>
    </subcellularLocation>
    <text evidence="1 3">The channel is internalized from the cell surface into an endosomal recycling compartment, from where it is recycled to the cell membrane. In the oviduct and bronchus, detected on the apical side of epithelial cells, but not associated with cilia. In Sertoli cells, a processed product is detected in the nucleus. ER stress induces GORASP2-mediated unconventional (ER/Golgi-independent) trafficking of core-glycosylated CFTR to cell membrane.</text>
</comment>
<comment type="domain">
    <text evidence="1 2">Binds and hydrolyzes ATP via the two cytoplasmic ABC transporter nucleotide-binding domains. The two ATP-binding domains interact with each other, forming a head-to-tail dimer. Normal ATPase activity requires interaction between the two domains. The first ABC transporter nucleotide-binding domain has no ATPase activity by itself.</text>
</comment>
<comment type="domain">
    <text evidence="1">The PDZ-binding motif mediates interactions with GOPC and with the SLC4A7, NHERF1/EBP50 complex.</text>
</comment>
<comment type="domain">
    <text evidence="1">The disordered R region mediates channel activation when it is phosphorylated, but not in the absence of phosphorylation.</text>
</comment>
<comment type="PTM">
    <text evidence="1">N-glycosylated.</text>
</comment>
<comment type="PTM">
    <text evidence="1">Phosphorylated; cAMP treatment promotes phosphorylation and activates the channel. Dephosphorylation decreases the ATPase activity (in vitro). Phosphorylation at PKA sites activates the channel. Phosphorylation at PKC sites enhances the response to phosphorylation by PKA. Phosphorylated by AMPK; this inhibits channel activity.</text>
</comment>
<comment type="PTM">
    <text evidence="1">Ubiquitinated, leading to its degradation in the lysosome. Deubiquitination by USP10 in early endosomes enhances its endocytic recycling to the cell membrane. Ubiquitinated by RNF185 during ER stress. Ubiquitinated by MARCHF2 (By similarity).</text>
</comment>
<comment type="similarity">
    <text evidence="8">Belongs to the ABC transporter superfamily. ABCC family. CFTR transporter (TC 3.A.1.202) subfamily.</text>
</comment>
<protein>
    <recommendedName>
        <fullName evidence="1">Cystic fibrosis transmembrane conductance regulator</fullName>
        <shortName>CFTR</shortName>
    </recommendedName>
    <alternativeName>
        <fullName>ATP-binding cassette sub-family C member 7</fullName>
    </alternativeName>
    <alternativeName>
        <fullName>Channel conductance-controlling ATPase</fullName>
        <ecNumber evidence="1">5.6.1.6</ecNumber>
    </alternativeName>
    <alternativeName>
        <fullName>cAMP-dependent chloride channel</fullName>
    </alternativeName>
</protein>
<evidence type="ECO:0000250" key="1">
    <source>
        <dbReference type="UniProtKB" id="P13569"/>
    </source>
</evidence>
<evidence type="ECO:0000250" key="2">
    <source>
        <dbReference type="UniProtKB" id="P26361"/>
    </source>
</evidence>
<evidence type="ECO:0000250" key="3">
    <source>
        <dbReference type="UniProtKB" id="P34158"/>
    </source>
</evidence>
<evidence type="ECO:0000255" key="4"/>
<evidence type="ECO:0000255" key="5">
    <source>
        <dbReference type="PROSITE-ProRule" id="PRU00434"/>
    </source>
</evidence>
<evidence type="ECO:0000255" key="6">
    <source>
        <dbReference type="PROSITE-ProRule" id="PRU00441"/>
    </source>
</evidence>
<evidence type="ECO:0000256" key="7">
    <source>
        <dbReference type="SAM" id="MobiDB-lite"/>
    </source>
</evidence>
<evidence type="ECO:0000305" key="8"/>
<sequence length="1481" mass="167914">MQRSPLEKASVVSKLFFSWTRPILKKGYRQRLELSDIYHISSSDSADNLSEKLEREWDRELASKKNPKLINALRRCFFWRFMFYGIILYLGEVTKAVQPLLLGRIIASYDPDNKAERSIAIYLGIGLCLLFIVRTLLLHPAIFGLHHIGMQMRIAMFSLIYKKTLKLSSRVLDKISIGQLVSLLSNNLNKFDEGLALAHFVWIAPLQVTLLMGLLWELLQAFTFCGLAFLVVLAFLQAGLGKMMMKYRDQRAGKINERLVITSEIIENIQSVKAYCWEEAMEKIIENLRQTELKLTRKAAYVRYLNSSAFFFSGFFVVFLSVLPYALLKGIILRKIFTTISFCIVLRMAVTRQFPWAVQTWYDSLGAINKIQDFLQKQEYKTLEYNLTTTDVVMENVTAYWEEGFSKLFEKAKENNNNRKISNGDNNLFFSNLLLGAPVLKDISFKIERGQLMAVAGSTGAGKTSLLMMIMGELEPSEGKIKHSGRISFCSQYSWIMPGTIKDNIIFGVSYDEYRYRSVIKACQLEEDISKFAEKDNIVLGEGGITLSGGQRARISLARAVYKDADLYLLDSPFGYLDVLTEKEIFESCVCKLMANKTRILVTSKMEHLKKADKILILHEGSIYFYGTFSELQNQRPDFSSKLMGCDTFDQFTAERRNSIITETLRRFSLEGDTSVSWNETKKPSFKQTGEFGEKRKNSILNSINSKRKFSVAQKTSLQMNGIEETSDEPLERKLSLVPHSEPGEGILPRSNAVNSGPTFLGGRRQSVLNLMTCSSVNQGQSIHRKTATSTRKMSLAPQASLAEIDIYSRRLSQDTGLEISEEINEEDLRDCFFDDVENIPAVTTWNTYLRYITVHKSLMFVLIWCLVVFLAEVAASLVVLCLFPKILFQDKGNSTKSANNSYAVIITSTSSYYIFYIYVGVADTLLALGLFRGLPLVHTLITVSKTLHHKMLQSVLQAPMSTLNTLKTGGILNRFSKDIAVLDDLLPLTIFDFVQLLLIVIGAVVVVSVLQPYIFLATVPVIAAFILLRAYFLHTSQQLKQLESEGRSPIFTHLVTSLKGLWTLRAFGRQPYFETLFHKALNLHTANWFLYLSTLRWFQMRIEMIFVIFFIAVTFISILTTGEGEGRVGIILTLAMNIMGTLQWAVNSSIDVDSLMRSVSRVFKFIDMPTEDGKPNNSFRPSKDSQLSKVMVIENQHVKKDDIWPSGGQMTVKDLTAKYIDGGNAILENISFSISPGQRVGLLGRTGSGKSTLLLAFLRLLNTKGEIQIDGVSWDSITLQQWRKAFGVIPQKVFIFSGTFRKNLDPYGQWSDQEIWKVADEVGLRSVIEQFPGKLDFVLVDGGCVLSHGHKQLMCLARSVLSKAKILLLDEPSAHLDPITYQIIRRTLKQAFADCTVILSEHRIEAMLECQRFLVIEENKVRQYDSIQRMLSEKSLFRQAISPADRLKLLPQRNSSRQKSRSNIAALKEETEEEVQETKI</sequence>
<dbReference type="EC" id="5.6.1.6" evidence="1"/>
<dbReference type="EMBL" id="DP000195">
    <property type="protein sequence ID" value="ABJ08877.1"/>
    <property type="molecule type" value="Genomic_DNA"/>
</dbReference>
<dbReference type="SMR" id="Q07DW5"/>
<dbReference type="GlyCosmos" id="Q07DW5">
    <property type="glycosylation" value="2 sites, No reported glycans"/>
</dbReference>
<dbReference type="GO" id="GO:0016324">
    <property type="term" value="C:apical plasma membrane"/>
    <property type="evidence" value="ECO:0000250"/>
    <property type="project" value="UniProtKB"/>
</dbReference>
<dbReference type="GO" id="GO:0034707">
    <property type="term" value="C:chloride channel complex"/>
    <property type="evidence" value="ECO:0007669"/>
    <property type="project" value="UniProtKB-KW"/>
</dbReference>
<dbReference type="GO" id="GO:0005829">
    <property type="term" value="C:cytosol"/>
    <property type="evidence" value="ECO:0007669"/>
    <property type="project" value="TreeGrafter"/>
</dbReference>
<dbReference type="GO" id="GO:0005769">
    <property type="term" value="C:early endosome"/>
    <property type="evidence" value="ECO:0000250"/>
    <property type="project" value="UniProtKB"/>
</dbReference>
<dbReference type="GO" id="GO:0031901">
    <property type="term" value="C:early endosome membrane"/>
    <property type="evidence" value="ECO:0007669"/>
    <property type="project" value="UniProtKB-SubCell"/>
</dbReference>
<dbReference type="GO" id="GO:0005789">
    <property type="term" value="C:endoplasmic reticulum membrane"/>
    <property type="evidence" value="ECO:0000250"/>
    <property type="project" value="UniProtKB"/>
</dbReference>
<dbReference type="GO" id="GO:0016020">
    <property type="term" value="C:membrane"/>
    <property type="evidence" value="ECO:0000250"/>
    <property type="project" value="UniProtKB"/>
</dbReference>
<dbReference type="GO" id="GO:0005634">
    <property type="term" value="C:nucleus"/>
    <property type="evidence" value="ECO:0000250"/>
    <property type="project" value="UniProtKB"/>
</dbReference>
<dbReference type="GO" id="GO:0005886">
    <property type="term" value="C:plasma membrane"/>
    <property type="evidence" value="ECO:0000250"/>
    <property type="project" value="UniProtKB"/>
</dbReference>
<dbReference type="GO" id="GO:0055038">
    <property type="term" value="C:recycling endosome membrane"/>
    <property type="evidence" value="ECO:0007669"/>
    <property type="project" value="UniProtKB-SubCell"/>
</dbReference>
<dbReference type="GO" id="GO:0140359">
    <property type="term" value="F:ABC-type transporter activity"/>
    <property type="evidence" value="ECO:0007669"/>
    <property type="project" value="InterPro"/>
</dbReference>
<dbReference type="GO" id="GO:0005524">
    <property type="term" value="F:ATP binding"/>
    <property type="evidence" value="ECO:0007669"/>
    <property type="project" value="UniProtKB-KW"/>
</dbReference>
<dbReference type="GO" id="GO:0016887">
    <property type="term" value="F:ATP hydrolysis activity"/>
    <property type="evidence" value="ECO:0000250"/>
    <property type="project" value="UniProtKB"/>
</dbReference>
<dbReference type="GO" id="GO:0015106">
    <property type="term" value="F:bicarbonate transmembrane transporter activity"/>
    <property type="evidence" value="ECO:0000250"/>
    <property type="project" value="UniProtKB"/>
</dbReference>
<dbReference type="GO" id="GO:0005254">
    <property type="term" value="F:chloride channel activity"/>
    <property type="evidence" value="ECO:0000250"/>
    <property type="project" value="UniProtKB"/>
</dbReference>
<dbReference type="GO" id="GO:0019869">
    <property type="term" value="F:chloride channel inhibitor activity"/>
    <property type="evidence" value="ECO:0000250"/>
    <property type="project" value="UniProtKB"/>
</dbReference>
<dbReference type="GO" id="GO:0015108">
    <property type="term" value="F:chloride transmembrane transporter activity"/>
    <property type="evidence" value="ECO:0000250"/>
    <property type="project" value="UniProtKB"/>
</dbReference>
<dbReference type="GO" id="GO:0005260">
    <property type="term" value="F:intracellularly ATP-gated chloride channel activity"/>
    <property type="evidence" value="ECO:0000250"/>
    <property type="project" value="UniProtKB"/>
</dbReference>
<dbReference type="GO" id="GO:0015701">
    <property type="term" value="P:bicarbonate transport"/>
    <property type="evidence" value="ECO:0000250"/>
    <property type="project" value="UniProtKB"/>
</dbReference>
<dbReference type="GO" id="GO:0071320">
    <property type="term" value="P:cellular response to cAMP"/>
    <property type="evidence" value="ECO:0000250"/>
    <property type="project" value="UniProtKB"/>
</dbReference>
<dbReference type="GO" id="GO:1904322">
    <property type="term" value="P:cellular response to forskolin"/>
    <property type="evidence" value="ECO:0000250"/>
    <property type="project" value="UniProtKB"/>
</dbReference>
<dbReference type="GO" id="GO:1902476">
    <property type="term" value="P:chloride transmembrane transport"/>
    <property type="evidence" value="ECO:0000250"/>
    <property type="project" value="UniProtKB"/>
</dbReference>
<dbReference type="GO" id="GO:0051454">
    <property type="term" value="P:intracellular pH elevation"/>
    <property type="evidence" value="ECO:0000250"/>
    <property type="project" value="UniProtKB"/>
</dbReference>
<dbReference type="GO" id="GO:0060081">
    <property type="term" value="P:membrane hyperpolarization"/>
    <property type="evidence" value="ECO:0000250"/>
    <property type="project" value="UniProtKB"/>
</dbReference>
<dbReference type="GO" id="GO:0050891">
    <property type="term" value="P:multicellular organismal-level water homeostasis"/>
    <property type="evidence" value="ECO:0000250"/>
    <property type="project" value="UniProtKB"/>
</dbReference>
<dbReference type="GO" id="GO:0034976">
    <property type="term" value="P:response to endoplasmic reticulum stress"/>
    <property type="evidence" value="ECO:0000250"/>
    <property type="project" value="UniProtKB"/>
</dbReference>
<dbReference type="GO" id="GO:0048240">
    <property type="term" value="P:sperm capacitation"/>
    <property type="evidence" value="ECO:0000250"/>
    <property type="project" value="UniProtKB"/>
</dbReference>
<dbReference type="GO" id="GO:0035377">
    <property type="term" value="P:transepithelial water transport"/>
    <property type="evidence" value="ECO:0000250"/>
    <property type="project" value="UniProtKB"/>
</dbReference>
<dbReference type="CDD" id="cd18594">
    <property type="entry name" value="ABC_6TM_CFTR_D1"/>
    <property type="match status" value="1"/>
</dbReference>
<dbReference type="CDD" id="cd18600">
    <property type="entry name" value="ABC_6TM_CFTR_D2"/>
    <property type="match status" value="1"/>
</dbReference>
<dbReference type="CDD" id="cd03291">
    <property type="entry name" value="ABCC_CFTR1"/>
    <property type="match status" value="1"/>
</dbReference>
<dbReference type="FunFam" id="1.20.1560.10:FF:000017">
    <property type="entry name" value="Cystic fibrosis transmembrane conductance regulator"/>
    <property type="match status" value="1"/>
</dbReference>
<dbReference type="FunFam" id="1.20.1560.10:FF:000019">
    <property type="entry name" value="Cystic fibrosis transmembrane conductance regulator"/>
    <property type="match status" value="1"/>
</dbReference>
<dbReference type="FunFam" id="3.40.50.300:FF:000581">
    <property type="entry name" value="Cystic fibrosis transmembrane conductance regulator"/>
    <property type="match status" value="1"/>
</dbReference>
<dbReference type="FunFam" id="3.40.50.300:FF:000591">
    <property type="entry name" value="Cystic fibrosis transmembrane conductance regulator"/>
    <property type="match status" value="1"/>
</dbReference>
<dbReference type="Gene3D" id="1.20.1560.10">
    <property type="entry name" value="ABC transporter type 1, transmembrane domain"/>
    <property type="match status" value="2"/>
</dbReference>
<dbReference type="Gene3D" id="3.40.50.300">
    <property type="entry name" value="P-loop containing nucleotide triphosphate hydrolases"/>
    <property type="match status" value="2"/>
</dbReference>
<dbReference type="InterPro" id="IPR003593">
    <property type="entry name" value="AAA+_ATPase"/>
</dbReference>
<dbReference type="InterPro" id="IPR011527">
    <property type="entry name" value="ABC1_TM_dom"/>
</dbReference>
<dbReference type="InterPro" id="IPR036640">
    <property type="entry name" value="ABC1_TM_sf"/>
</dbReference>
<dbReference type="InterPro" id="IPR003439">
    <property type="entry name" value="ABC_transporter-like_ATP-bd"/>
</dbReference>
<dbReference type="InterPro" id="IPR017871">
    <property type="entry name" value="ABC_transporter-like_CS"/>
</dbReference>
<dbReference type="InterPro" id="IPR050173">
    <property type="entry name" value="ABC_transporter_C-like"/>
</dbReference>
<dbReference type="InterPro" id="IPR009147">
    <property type="entry name" value="CFTR/ABCC7"/>
</dbReference>
<dbReference type="InterPro" id="IPR047082">
    <property type="entry name" value="CFTR1_ATP-bd_dom1"/>
</dbReference>
<dbReference type="InterPro" id="IPR025837">
    <property type="entry name" value="CFTR_reg_dom"/>
</dbReference>
<dbReference type="InterPro" id="IPR027417">
    <property type="entry name" value="P-loop_NTPase"/>
</dbReference>
<dbReference type="NCBIfam" id="TIGR01271">
    <property type="entry name" value="CFTR_protein"/>
    <property type="match status" value="1"/>
</dbReference>
<dbReference type="PANTHER" id="PTHR24223">
    <property type="entry name" value="ATP-BINDING CASSETTE SUB-FAMILY C"/>
    <property type="match status" value="1"/>
</dbReference>
<dbReference type="PANTHER" id="PTHR24223:SF19">
    <property type="entry name" value="CYSTIC FIBROSIS TRANSMEMBRANE CONDUCTANCE REGULATOR"/>
    <property type="match status" value="1"/>
</dbReference>
<dbReference type="Pfam" id="PF00664">
    <property type="entry name" value="ABC_membrane"/>
    <property type="match status" value="2"/>
</dbReference>
<dbReference type="Pfam" id="PF00005">
    <property type="entry name" value="ABC_tran"/>
    <property type="match status" value="2"/>
</dbReference>
<dbReference type="Pfam" id="PF14396">
    <property type="entry name" value="CFTR_R"/>
    <property type="match status" value="1"/>
</dbReference>
<dbReference type="PRINTS" id="PR01851">
    <property type="entry name" value="CYSFIBREGLTR"/>
</dbReference>
<dbReference type="SMART" id="SM00382">
    <property type="entry name" value="AAA"/>
    <property type="match status" value="2"/>
</dbReference>
<dbReference type="SUPFAM" id="SSF90123">
    <property type="entry name" value="ABC transporter transmembrane region"/>
    <property type="match status" value="2"/>
</dbReference>
<dbReference type="SUPFAM" id="SSF52540">
    <property type="entry name" value="P-loop containing nucleoside triphosphate hydrolases"/>
    <property type="match status" value="2"/>
</dbReference>
<dbReference type="PROSITE" id="PS50929">
    <property type="entry name" value="ABC_TM1F"/>
    <property type="match status" value="2"/>
</dbReference>
<dbReference type="PROSITE" id="PS00211">
    <property type="entry name" value="ABC_TRANSPORTER_1"/>
    <property type="match status" value="1"/>
</dbReference>
<dbReference type="PROSITE" id="PS50893">
    <property type="entry name" value="ABC_TRANSPORTER_2"/>
    <property type="match status" value="2"/>
</dbReference>
<keyword id="KW-0067">ATP-binding</keyword>
<keyword id="KW-1003">Cell membrane</keyword>
<keyword id="KW-0868">Chloride</keyword>
<keyword id="KW-0869">Chloride channel</keyword>
<keyword id="KW-0256">Endoplasmic reticulum</keyword>
<keyword id="KW-0967">Endosome</keyword>
<keyword id="KW-0325">Glycoprotein</keyword>
<keyword id="KW-0407">Ion channel</keyword>
<keyword id="KW-0406">Ion transport</keyword>
<keyword id="KW-0413">Isomerase</keyword>
<keyword id="KW-1017">Isopeptide bond</keyword>
<keyword id="KW-0449">Lipoprotein</keyword>
<keyword id="KW-0472">Membrane</keyword>
<keyword id="KW-0547">Nucleotide-binding</keyword>
<keyword id="KW-0539">Nucleus</keyword>
<keyword id="KW-0564">Palmitate</keyword>
<keyword id="KW-0597">Phosphoprotein</keyword>
<keyword id="KW-0677">Repeat</keyword>
<keyword id="KW-0812">Transmembrane</keyword>
<keyword id="KW-1133">Transmembrane helix</keyword>
<keyword id="KW-0813">Transport</keyword>
<keyword id="KW-0832">Ubl conjugation</keyword>
<gene>
    <name evidence="1" type="primary">CFTR</name>
    <name type="synonym">ABCC7</name>
</gene>
<proteinExistence type="inferred from homology"/>
<reference key="1">
    <citation type="submission" date="2006-09" db="EMBL/GenBank/DDBJ databases">
        <title>NISC comparative sequencing initiative.</title>
        <authorList>
            <person name="Antonellis A."/>
            <person name="Ayele K."/>
            <person name="Benjamin B."/>
            <person name="Blakesley R.W."/>
            <person name="Boakye A."/>
            <person name="Bouffard G.G."/>
            <person name="Brinkley C."/>
            <person name="Brooks S."/>
            <person name="Chu G."/>
            <person name="Coleman H."/>
            <person name="Engle J."/>
            <person name="Gestole M."/>
            <person name="Greene A."/>
            <person name="Guan X."/>
            <person name="Gupta J."/>
            <person name="Haghighi P."/>
            <person name="Han J."/>
            <person name="Hansen N."/>
            <person name="Ho S.-L."/>
            <person name="Hu P."/>
            <person name="Hunter G."/>
            <person name="Hurle B."/>
            <person name="Idol J.R."/>
            <person name="Kwong P."/>
            <person name="Laric P."/>
            <person name="Larson S."/>
            <person name="Lee-Lin S.-Q."/>
            <person name="Legaspi R."/>
            <person name="Madden M."/>
            <person name="Maduro Q.L."/>
            <person name="Maduro V.B."/>
            <person name="Margulies E.H."/>
            <person name="Masiello C."/>
            <person name="Maskeri B."/>
            <person name="McDowell J."/>
            <person name="Mojidi H.A."/>
            <person name="Mullikin J.C."/>
            <person name="Oestreicher J.S."/>
            <person name="Park M."/>
            <person name="Portnoy M.E."/>
            <person name="Prasad A."/>
            <person name="Puri O."/>
            <person name="Reddix-Dugue N."/>
            <person name="Schandler K."/>
            <person name="Schueler M.G."/>
            <person name="Sison C."/>
            <person name="Stantripop S."/>
            <person name="Stephen E."/>
            <person name="Taye A."/>
            <person name="Thomas J.W."/>
            <person name="Thomas P.J."/>
            <person name="Tsipouri V."/>
            <person name="Ung L."/>
            <person name="Vogt J.L."/>
            <person name="Wetherby K.D."/>
            <person name="Young A."/>
            <person name="Green E.D."/>
        </authorList>
    </citation>
    <scope>NUCLEOTIDE SEQUENCE [LARGE SCALE GENOMIC DNA]</scope>
</reference>